<dbReference type="EC" id="6.1.1.19" evidence="1"/>
<dbReference type="EMBL" id="CP000606">
    <property type="protein sequence ID" value="ABO22250.1"/>
    <property type="molecule type" value="Genomic_DNA"/>
</dbReference>
<dbReference type="RefSeq" id="WP_011864184.1">
    <property type="nucleotide sequence ID" value="NC_009092.1"/>
</dbReference>
<dbReference type="SMR" id="A3Q9V2"/>
<dbReference type="STRING" id="323850.Shew_0378"/>
<dbReference type="KEGG" id="slo:Shew_0378"/>
<dbReference type="eggNOG" id="COG0018">
    <property type="taxonomic scope" value="Bacteria"/>
</dbReference>
<dbReference type="HOGENOM" id="CLU_006406_5_1_6"/>
<dbReference type="OrthoDB" id="9803211at2"/>
<dbReference type="Proteomes" id="UP000001558">
    <property type="component" value="Chromosome"/>
</dbReference>
<dbReference type="GO" id="GO:0005737">
    <property type="term" value="C:cytoplasm"/>
    <property type="evidence" value="ECO:0007669"/>
    <property type="project" value="UniProtKB-SubCell"/>
</dbReference>
<dbReference type="GO" id="GO:0004814">
    <property type="term" value="F:arginine-tRNA ligase activity"/>
    <property type="evidence" value="ECO:0007669"/>
    <property type="project" value="UniProtKB-UniRule"/>
</dbReference>
<dbReference type="GO" id="GO:0005524">
    <property type="term" value="F:ATP binding"/>
    <property type="evidence" value="ECO:0007669"/>
    <property type="project" value="UniProtKB-UniRule"/>
</dbReference>
<dbReference type="GO" id="GO:0006420">
    <property type="term" value="P:arginyl-tRNA aminoacylation"/>
    <property type="evidence" value="ECO:0007669"/>
    <property type="project" value="UniProtKB-UniRule"/>
</dbReference>
<dbReference type="CDD" id="cd07956">
    <property type="entry name" value="Anticodon_Ia_Arg"/>
    <property type="match status" value="1"/>
</dbReference>
<dbReference type="CDD" id="cd00671">
    <property type="entry name" value="ArgRS_core"/>
    <property type="match status" value="1"/>
</dbReference>
<dbReference type="FunFam" id="3.30.1360.70:FF:000003">
    <property type="entry name" value="Arginine--tRNA ligase"/>
    <property type="match status" value="1"/>
</dbReference>
<dbReference type="FunFam" id="3.40.50.620:FF:000030">
    <property type="entry name" value="Arginine--tRNA ligase"/>
    <property type="match status" value="1"/>
</dbReference>
<dbReference type="FunFam" id="1.10.730.10:FF:000006">
    <property type="entry name" value="Arginyl-tRNA synthetase 2, mitochondrial"/>
    <property type="match status" value="1"/>
</dbReference>
<dbReference type="Gene3D" id="3.30.1360.70">
    <property type="entry name" value="Arginyl tRNA synthetase N-terminal domain"/>
    <property type="match status" value="1"/>
</dbReference>
<dbReference type="Gene3D" id="3.40.50.620">
    <property type="entry name" value="HUPs"/>
    <property type="match status" value="1"/>
</dbReference>
<dbReference type="Gene3D" id="1.10.730.10">
    <property type="entry name" value="Isoleucyl-tRNA Synthetase, Domain 1"/>
    <property type="match status" value="1"/>
</dbReference>
<dbReference type="HAMAP" id="MF_00123">
    <property type="entry name" value="Arg_tRNA_synth"/>
    <property type="match status" value="1"/>
</dbReference>
<dbReference type="InterPro" id="IPR001412">
    <property type="entry name" value="aa-tRNA-synth_I_CS"/>
</dbReference>
<dbReference type="InterPro" id="IPR001278">
    <property type="entry name" value="Arg-tRNA-ligase"/>
</dbReference>
<dbReference type="InterPro" id="IPR005148">
    <property type="entry name" value="Arg-tRNA-synth_N"/>
</dbReference>
<dbReference type="InterPro" id="IPR036695">
    <property type="entry name" value="Arg-tRNA-synth_N_sf"/>
</dbReference>
<dbReference type="InterPro" id="IPR035684">
    <property type="entry name" value="ArgRS_core"/>
</dbReference>
<dbReference type="InterPro" id="IPR008909">
    <property type="entry name" value="DALR_anticod-bd"/>
</dbReference>
<dbReference type="InterPro" id="IPR014729">
    <property type="entry name" value="Rossmann-like_a/b/a_fold"/>
</dbReference>
<dbReference type="InterPro" id="IPR009080">
    <property type="entry name" value="tRNAsynth_Ia_anticodon-bd"/>
</dbReference>
<dbReference type="NCBIfam" id="TIGR00456">
    <property type="entry name" value="argS"/>
    <property type="match status" value="1"/>
</dbReference>
<dbReference type="PANTHER" id="PTHR11956:SF5">
    <property type="entry name" value="ARGININE--TRNA LIGASE, CYTOPLASMIC"/>
    <property type="match status" value="1"/>
</dbReference>
<dbReference type="PANTHER" id="PTHR11956">
    <property type="entry name" value="ARGINYL-TRNA SYNTHETASE"/>
    <property type="match status" value="1"/>
</dbReference>
<dbReference type="Pfam" id="PF03485">
    <property type="entry name" value="Arg_tRNA_synt_N"/>
    <property type="match status" value="1"/>
</dbReference>
<dbReference type="Pfam" id="PF05746">
    <property type="entry name" value="DALR_1"/>
    <property type="match status" value="1"/>
</dbReference>
<dbReference type="Pfam" id="PF00750">
    <property type="entry name" value="tRNA-synt_1d"/>
    <property type="match status" value="1"/>
</dbReference>
<dbReference type="PRINTS" id="PR01038">
    <property type="entry name" value="TRNASYNTHARG"/>
</dbReference>
<dbReference type="SMART" id="SM01016">
    <property type="entry name" value="Arg_tRNA_synt_N"/>
    <property type="match status" value="1"/>
</dbReference>
<dbReference type="SMART" id="SM00836">
    <property type="entry name" value="DALR_1"/>
    <property type="match status" value="1"/>
</dbReference>
<dbReference type="SUPFAM" id="SSF47323">
    <property type="entry name" value="Anticodon-binding domain of a subclass of class I aminoacyl-tRNA synthetases"/>
    <property type="match status" value="1"/>
</dbReference>
<dbReference type="SUPFAM" id="SSF55190">
    <property type="entry name" value="Arginyl-tRNA synthetase (ArgRS), N-terminal 'additional' domain"/>
    <property type="match status" value="1"/>
</dbReference>
<dbReference type="SUPFAM" id="SSF52374">
    <property type="entry name" value="Nucleotidylyl transferase"/>
    <property type="match status" value="1"/>
</dbReference>
<dbReference type="PROSITE" id="PS00178">
    <property type="entry name" value="AA_TRNA_LIGASE_I"/>
    <property type="match status" value="1"/>
</dbReference>
<proteinExistence type="inferred from homology"/>
<organism>
    <name type="scientific">Shewanella loihica (strain ATCC BAA-1088 / PV-4)</name>
    <dbReference type="NCBI Taxonomy" id="323850"/>
    <lineage>
        <taxon>Bacteria</taxon>
        <taxon>Pseudomonadati</taxon>
        <taxon>Pseudomonadota</taxon>
        <taxon>Gammaproteobacteria</taxon>
        <taxon>Alteromonadales</taxon>
        <taxon>Shewanellaceae</taxon>
        <taxon>Shewanella</taxon>
    </lineage>
</organism>
<gene>
    <name evidence="1" type="primary">argS</name>
    <name type="ordered locus">Shew_0378</name>
</gene>
<keyword id="KW-0030">Aminoacyl-tRNA synthetase</keyword>
<keyword id="KW-0067">ATP-binding</keyword>
<keyword id="KW-0963">Cytoplasm</keyword>
<keyword id="KW-0436">Ligase</keyword>
<keyword id="KW-0547">Nucleotide-binding</keyword>
<keyword id="KW-0648">Protein biosynthesis</keyword>
<keyword id="KW-1185">Reference proteome</keyword>
<reference key="1">
    <citation type="submission" date="2007-03" db="EMBL/GenBank/DDBJ databases">
        <title>Complete sequence of Shewanella loihica PV-4.</title>
        <authorList>
            <consortium name="US DOE Joint Genome Institute"/>
            <person name="Copeland A."/>
            <person name="Lucas S."/>
            <person name="Lapidus A."/>
            <person name="Barry K."/>
            <person name="Detter J.C."/>
            <person name="Glavina del Rio T."/>
            <person name="Hammon N."/>
            <person name="Israni S."/>
            <person name="Dalin E."/>
            <person name="Tice H."/>
            <person name="Pitluck S."/>
            <person name="Chain P."/>
            <person name="Malfatti S."/>
            <person name="Shin M."/>
            <person name="Vergez L."/>
            <person name="Schmutz J."/>
            <person name="Larimer F."/>
            <person name="Land M."/>
            <person name="Hauser L."/>
            <person name="Kyrpides N."/>
            <person name="Mikhailova N."/>
            <person name="Romine M.F."/>
            <person name="Serres G."/>
            <person name="Fredrickson J."/>
            <person name="Tiedje J."/>
            <person name="Richardson P."/>
        </authorList>
    </citation>
    <scope>NUCLEOTIDE SEQUENCE [LARGE SCALE GENOMIC DNA]</scope>
    <source>
        <strain>ATCC BAA-1088 / PV-4</strain>
    </source>
</reference>
<evidence type="ECO:0000255" key="1">
    <source>
        <dbReference type="HAMAP-Rule" id="MF_00123"/>
    </source>
</evidence>
<name>SYR_SHELP</name>
<protein>
    <recommendedName>
        <fullName evidence="1">Arginine--tRNA ligase</fullName>
        <ecNumber evidence="1">6.1.1.19</ecNumber>
    </recommendedName>
    <alternativeName>
        <fullName evidence="1">Arginyl-tRNA synthetase</fullName>
        <shortName evidence="1">ArgRS</shortName>
    </alternativeName>
</protein>
<accession>A3Q9V2</accession>
<comment type="catalytic activity">
    <reaction evidence="1">
        <text>tRNA(Arg) + L-arginine + ATP = L-arginyl-tRNA(Arg) + AMP + diphosphate</text>
        <dbReference type="Rhea" id="RHEA:20301"/>
        <dbReference type="Rhea" id="RHEA-COMP:9658"/>
        <dbReference type="Rhea" id="RHEA-COMP:9673"/>
        <dbReference type="ChEBI" id="CHEBI:30616"/>
        <dbReference type="ChEBI" id="CHEBI:32682"/>
        <dbReference type="ChEBI" id="CHEBI:33019"/>
        <dbReference type="ChEBI" id="CHEBI:78442"/>
        <dbReference type="ChEBI" id="CHEBI:78513"/>
        <dbReference type="ChEBI" id="CHEBI:456215"/>
        <dbReference type="EC" id="6.1.1.19"/>
    </reaction>
</comment>
<comment type="subunit">
    <text evidence="1">Monomer.</text>
</comment>
<comment type="subcellular location">
    <subcellularLocation>
        <location evidence="1">Cytoplasm</location>
    </subcellularLocation>
</comment>
<comment type="similarity">
    <text evidence="1">Belongs to the class-I aminoacyl-tRNA synthetase family.</text>
</comment>
<feature type="chain" id="PRO_1000018116" description="Arginine--tRNA ligase">
    <location>
        <begin position="1"/>
        <end position="581"/>
    </location>
</feature>
<feature type="short sequence motif" description="'HIGH' region">
    <location>
        <begin position="126"/>
        <end position="136"/>
    </location>
</feature>
<sequence length="581" mass="64844">MKSHIQSLLEQAIQTLKQQAIIPADFEARIQVDRTKDKTHGDFATNLAMMLTKVARKNPREVAQLIIDSLPQNSQVAKVEIAGPGFINFFIDENALTNQLMAALSDDHLGVTLPTPQTVVVDYSSPNLAKEMHVGHLRSTIIGDAVVRALEFQGHKVIRQNHVGDWGTQFGMLLAYMEELRAQQGEQAQVELADLESFYRAAKVRFDESEEFATRARQLVVELQSGDEYCNKLWREFNDISLSHCHEVYERLGVSLTRADVRGESAYNDDLEQVVRDLDAQGLLSESNGAKVVFQDEFQTKEGEPLPVIIQKADGGFLYATSDLAAMRYRSNVLKADRALYFVDLRQALHFQQVFSLARTANFVRPELSLEHMGFGTMNGEDGRPFKTRSGGVVKLVDLLSEAETRALELVRSKNPDMDEEELAKIAKVVGIASVKYADLSKNRASDYIFSFEQMLSFEGNTAPYLLYAYTRVAGIFKRAAEIDLTGASIKLEHDKEKELGNKLAQFAEVLGRMVAKGQPHALCGYLFELAGAFSSFYEACPVLAADSEDEKKSRLLLAQLTAKTLKQGLDLLGIETLERM</sequence>